<accession>Q04585</accession>
<accession>D6VS95</accession>
<protein>
    <recommendedName>
        <fullName>D-ribulokinase YDR109C</fullName>
        <ecNumber evidence="2">2.7.1.47</ecNumber>
    </recommendedName>
</protein>
<name>YDR09_YEAST</name>
<evidence type="ECO:0000256" key="1">
    <source>
        <dbReference type="SAM" id="MobiDB-lite"/>
    </source>
</evidence>
<evidence type="ECO:0000269" key="2">
    <source>
    </source>
</evidence>
<evidence type="ECO:0000303" key="3">
    <source>
    </source>
</evidence>
<evidence type="ECO:0000305" key="4"/>
<evidence type="ECO:0000305" key="5">
    <source>
    </source>
</evidence>
<evidence type="ECO:0000312" key="6">
    <source>
        <dbReference type="SGD" id="S000002516"/>
    </source>
</evidence>
<comment type="function">
    <text evidence="2">Catalyzes ATP-dependent phosphorylation of D-ribulose at C-5 to form D-ribulose 5-phosphate. Postulated to function in a metabolite repair mechanism by preventing toxic accumulation of free D-ribulose formed by non-specific phosphatase activities. Alternatively, may play a role in regulating D-ribulose 5-phosphate recycling in the pentose phosphate pathway.</text>
</comment>
<comment type="catalytic activity">
    <reaction evidence="2">
        <text>D-ribulose + ATP = D-ribulose 5-phosphate + ADP + H(+)</text>
        <dbReference type="Rhea" id="RHEA:17601"/>
        <dbReference type="ChEBI" id="CHEBI:15378"/>
        <dbReference type="ChEBI" id="CHEBI:17173"/>
        <dbReference type="ChEBI" id="CHEBI:30616"/>
        <dbReference type="ChEBI" id="CHEBI:58121"/>
        <dbReference type="ChEBI" id="CHEBI:456216"/>
        <dbReference type="EC" id="2.7.1.47"/>
    </reaction>
    <physiologicalReaction direction="left-to-right" evidence="5">
        <dbReference type="Rhea" id="RHEA:17602"/>
    </physiologicalReaction>
</comment>
<comment type="biophysicochemical properties">
    <kinetics>
        <KM evidence="2">217 uM for D-ribulose</KM>
        <Vmax evidence="2">22.0 umol/min/mg enzyme toward D-ribulose</Vmax>
    </kinetics>
</comment>
<comment type="pathway">
    <text evidence="5">Carbohydrate metabolism; pentose and glucuronate interconversion.</text>
</comment>
<comment type="similarity">
    <text evidence="4">Belongs to the FGGY kinase family.</text>
</comment>
<feature type="chain" id="PRO_0000244445" description="D-ribulokinase YDR109C">
    <location>
        <begin position="1"/>
        <end position="715"/>
    </location>
</feature>
<feature type="region of interest" description="Disordered" evidence="1">
    <location>
        <begin position="1"/>
        <end position="27"/>
    </location>
</feature>
<keyword id="KW-0418">Kinase</keyword>
<keyword id="KW-1185">Reference proteome</keyword>
<keyword id="KW-0808">Transferase</keyword>
<reference key="1">
    <citation type="journal article" date="1997" name="Nature">
        <title>The nucleotide sequence of Saccharomyces cerevisiae chromosome IV.</title>
        <authorList>
            <person name="Jacq C."/>
            <person name="Alt-Moerbe J."/>
            <person name="Andre B."/>
            <person name="Arnold W."/>
            <person name="Bahr A."/>
            <person name="Ballesta J.P.G."/>
            <person name="Bargues M."/>
            <person name="Baron L."/>
            <person name="Becker A."/>
            <person name="Biteau N."/>
            <person name="Bloecker H."/>
            <person name="Blugeon C."/>
            <person name="Boskovic J."/>
            <person name="Brandt P."/>
            <person name="Brueckner M."/>
            <person name="Buitrago M.J."/>
            <person name="Coster F."/>
            <person name="Delaveau T."/>
            <person name="del Rey F."/>
            <person name="Dujon B."/>
            <person name="Eide L.G."/>
            <person name="Garcia-Cantalejo J.M."/>
            <person name="Goffeau A."/>
            <person name="Gomez-Peris A."/>
            <person name="Granotier C."/>
            <person name="Hanemann V."/>
            <person name="Hankeln T."/>
            <person name="Hoheisel J.D."/>
            <person name="Jaeger W."/>
            <person name="Jimenez A."/>
            <person name="Jonniaux J.-L."/>
            <person name="Kraemer C."/>
            <person name="Kuester H."/>
            <person name="Laamanen P."/>
            <person name="Legros Y."/>
            <person name="Louis E.J."/>
            <person name="Moeller-Rieker S."/>
            <person name="Monnet A."/>
            <person name="Moro M."/>
            <person name="Mueller-Auer S."/>
            <person name="Nussbaumer B."/>
            <person name="Paricio N."/>
            <person name="Paulin L."/>
            <person name="Perea J."/>
            <person name="Perez-Alonso M."/>
            <person name="Perez-Ortin J.E."/>
            <person name="Pohl T.M."/>
            <person name="Prydz H."/>
            <person name="Purnelle B."/>
            <person name="Rasmussen S.W."/>
            <person name="Remacha M.A."/>
            <person name="Revuelta J.L."/>
            <person name="Rieger M."/>
            <person name="Salom D."/>
            <person name="Saluz H.P."/>
            <person name="Saiz J.E."/>
            <person name="Saren A.-M."/>
            <person name="Schaefer M."/>
            <person name="Scharfe M."/>
            <person name="Schmidt E.R."/>
            <person name="Schneider C."/>
            <person name="Scholler P."/>
            <person name="Schwarz S."/>
            <person name="Soler-Mira A."/>
            <person name="Urrestarazu L.A."/>
            <person name="Verhasselt P."/>
            <person name="Vissers S."/>
            <person name="Voet M."/>
            <person name="Volckaert G."/>
            <person name="Wagner G."/>
            <person name="Wambutt R."/>
            <person name="Wedler E."/>
            <person name="Wedler H."/>
            <person name="Woelfl S."/>
            <person name="Harris D.E."/>
            <person name="Bowman S."/>
            <person name="Brown D."/>
            <person name="Churcher C.M."/>
            <person name="Connor R."/>
            <person name="Dedman K."/>
            <person name="Gentles S."/>
            <person name="Hamlin N."/>
            <person name="Hunt S."/>
            <person name="Jones L."/>
            <person name="McDonald S."/>
            <person name="Murphy L.D."/>
            <person name="Niblett D."/>
            <person name="Odell C."/>
            <person name="Oliver K."/>
            <person name="Rajandream M.A."/>
            <person name="Richards C."/>
            <person name="Shore L."/>
            <person name="Walsh S.V."/>
            <person name="Barrell B.G."/>
            <person name="Dietrich F.S."/>
            <person name="Mulligan J.T."/>
            <person name="Allen E."/>
            <person name="Araujo R."/>
            <person name="Aviles E."/>
            <person name="Berno A."/>
            <person name="Carpenter J."/>
            <person name="Chen E."/>
            <person name="Cherry J.M."/>
            <person name="Chung E."/>
            <person name="Duncan M."/>
            <person name="Hunicke-Smith S."/>
            <person name="Hyman R.W."/>
            <person name="Komp C."/>
            <person name="Lashkari D."/>
            <person name="Lew H."/>
            <person name="Lin D."/>
            <person name="Mosedale D."/>
            <person name="Nakahara K."/>
            <person name="Namath A."/>
            <person name="Oefner P."/>
            <person name="Oh C."/>
            <person name="Petel F.X."/>
            <person name="Roberts D."/>
            <person name="Schramm S."/>
            <person name="Schroeder M."/>
            <person name="Shogren T."/>
            <person name="Shroff N."/>
            <person name="Winant A."/>
            <person name="Yelton M.A."/>
            <person name="Botstein D."/>
            <person name="Davis R.W."/>
            <person name="Johnston M."/>
            <person name="Andrews S."/>
            <person name="Brinkman R."/>
            <person name="Cooper J."/>
            <person name="Ding H."/>
            <person name="Du Z."/>
            <person name="Favello A."/>
            <person name="Fulton L."/>
            <person name="Gattung S."/>
            <person name="Greco T."/>
            <person name="Hallsworth K."/>
            <person name="Hawkins J."/>
            <person name="Hillier L.W."/>
            <person name="Jier M."/>
            <person name="Johnson D."/>
            <person name="Johnston L."/>
            <person name="Kirsten J."/>
            <person name="Kucaba T."/>
            <person name="Langston Y."/>
            <person name="Latreille P."/>
            <person name="Le T."/>
            <person name="Mardis E."/>
            <person name="Menezes S."/>
            <person name="Miller N."/>
            <person name="Nhan M."/>
            <person name="Pauley A."/>
            <person name="Peluso D."/>
            <person name="Rifkin L."/>
            <person name="Riles L."/>
            <person name="Taich A."/>
            <person name="Trevaskis E."/>
            <person name="Vignati D."/>
            <person name="Wilcox L."/>
            <person name="Wohldman P."/>
            <person name="Vaudin M."/>
            <person name="Wilson R."/>
            <person name="Waterston R."/>
            <person name="Albermann K."/>
            <person name="Hani J."/>
            <person name="Heumann K."/>
            <person name="Kleine K."/>
            <person name="Mewes H.-W."/>
            <person name="Zollner A."/>
            <person name="Zaccaria P."/>
        </authorList>
    </citation>
    <scope>NUCLEOTIDE SEQUENCE [LARGE SCALE GENOMIC DNA]</scope>
    <source>
        <strain>ATCC 204508 / S288c</strain>
    </source>
</reference>
<reference key="2">
    <citation type="journal article" date="2014" name="G3 (Bethesda)">
        <title>The reference genome sequence of Saccharomyces cerevisiae: Then and now.</title>
        <authorList>
            <person name="Engel S.R."/>
            <person name="Dietrich F.S."/>
            <person name="Fisk D.G."/>
            <person name="Binkley G."/>
            <person name="Balakrishnan R."/>
            <person name="Costanzo M.C."/>
            <person name="Dwight S.S."/>
            <person name="Hitz B.C."/>
            <person name="Karra K."/>
            <person name="Nash R.S."/>
            <person name="Weng S."/>
            <person name="Wong E.D."/>
            <person name="Lloyd P."/>
            <person name="Skrzypek M.S."/>
            <person name="Miyasato S.R."/>
            <person name="Simison M."/>
            <person name="Cherry J.M."/>
        </authorList>
    </citation>
    <scope>GENOME REANNOTATION</scope>
    <source>
        <strain>ATCC 204508 / S288c</strain>
    </source>
</reference>
<reference key="3">
    <citation type="journal article" date="2008" name="Mol. Cell. Proteomics">
        <title>A multidimensional chromatography technology for in-depth phosphoproteome analysis.</title>
        <authorList>
            <person name="Albuquerque C.P."/>
            <person name="Smolka M.B."/>
            <person name="Payne S.H."/>
            <person name="Bafna V."/>
            <person name="Eng J."/>
            <person name="Zhou H."/>
        </authorList>
    </citation>
    <scope>IDENTIFICATION BY MASS SPECTROMETRY [LARGE SCALE ANALYSIS]</scope>
</reference>
<reference key="4">
    <citation type="journal article" date="2017" name="J. Biol. Chem.">
        <title>Molecular Identification of d-Ribulokinase in Budding Yeast and Mammals.</title>
        <authorList>
            <person name="Singh C."/>
            <person name="Glaab E."/>
            <person name="Linster C.L."/>
        </authorList>
    </citation>
    <scope>FUNCTION</scope>
    <scope>CATALYTIC ACTIVITY</scope>
    <scope>BIOPHYSICOCHEMICAL PROPERTIES</scope>
    <scope>PATHWAY</scope>
</reference>
<dbReference type="EC" id="2.7.1.47" evidence="2"/>
<dbReference type="EMBL" id="Z48758">
    <property type="protein sequence ID" value="CAA88663.1"/>
    <property type="molecule type" value="Genomic_DNA"/>
</dbReference>
<dbReference type="EMBL" id="BK006938">
    <property type="protein sequence ID" value="DAA11955.1"/>
    <property type="molecule type" value="Genomic_DNA"/>
</dbReference>
<dbReference type="PIR" id="S52675">
    <property type="entry name" value="S52675"/>
</dbReference>
<dbReference type="RefSeq" id="NP_010394.3">
    <property type="nucleotide sequence ID" value="NM_001180417.3"/>
</dbReference>
<dbReference type="SMR" id="Q04585"/>
<dbReference type="BioGRID" id="32167">
    <property type="interactions" value="20"/>
</dbReference>
<dbReference type="FunCoup" id="Q04585">
    <property type="interactions" value="384"/>
</dbReference>
<dbReference type="STRING" id="4932.YDR109C"/>
<dbReference type="iPTMnet" id="Q04585"/>
<dbReference type="PaxDb" id="4932-YDR109C"/>
<dbReference type="PeptideAtlas" id="Q04585"/>
<dbReference type="EnsemblFungi" id="YDR109C_mRNA">
    <property type="protein sequence ID" value="YDR109C"/>
    <property type="gene ID" value="YDR109C"/>
</dbReference>
<dbReference type="GeneID" id="851687"/>
<dbReference type="KEGG" id="sce:YDR109C"/>
<dbReference type="AGR" id="SGD:S000002516"/>
<dbReference type="SGD" id="S000002516">
    <property type="gene designation" value="YDR109C"/>
</dbReference>
<dbReference type="VEuPathDB" id="FungiDB:YDR109C"/>
<dbReference type="eggNOG" id="KOG2517">
    <property type="taxonomic scope" value="Eukaryota"/>
</dbReference>
<dbReference type="GeneTree" id="ENSGT01000000214434"/>
<dbReference type="HOGENOM" id="CLU_009281_10_1_1"/>
<dbReference type="InParanoid" id="Q04585"/>
<dbReference type="OMA" id="HKAMWHE"/>
<dbReference type="OrthoDB" id="203824at2759"/>
<dbReference type="BioCyc" id="MetaCyc:G3O-29711-MONOMER"/>
<dbReference type="BioCyc" id="YEAST:G3O-29711-MONOMER"/>
<dbReference type="BRENDA" id="2.7.1.47">
    <property type="organism ID" value="984"/>
</dbReference>
<dbReference type="UniPathway" id="UPA00246"/>
<dbReference type="BioGRID-ORCS" id="851687">
    <property type="hits" value="1 hit in 10 CRISPR screens"/>
</dbReference>
<dbReference type="PRO" id="PR:Q04585"/>
<dbReference type="Proteomes" id="UP000002311">
    <property type="component" value="Chromosome IV"/>
</dbReference>
<dbReference type="RNAct" id="Q04585">
    <property type="molecule type" value="protein"/>
</dbReference>
<dbReference type="GO" id="GO:0005737">
    <property type="term" value="C:cytoplasm"/>
    <property type="evidence" value="ECO:0000318"/>
    <property type="project" value="GO_Central"/>
</dbReference>
<dbReference type="GO" id="GO:0019150">
    <property type="term" value="F:D-ribulokinase activity"/>
    <property type="evidence" value="ECO:0000314"/>
    <property type="project" value="SGD"/>
</dbReference>
<dbReference type="GO" id="GO:0019321">
    <property type="term" value="P:pentose metabolic process"/>
    <property type="evidence" value="ECO:0000314"/>
    <property type="project" value="SGD"/>
</dbReference>
<dbReference type="CDD" id="cd07782">
    <property type="entry name" value="ASKHA_NBD_FGGY_D-RBK"/>
    <property type="match status" value="1"/>
</dbReference>
<dbReference type="Gene3D" id="1.20.58.2240">
    <property type="match status" value="1"/>
</dbReference>
<dbReference type="Gene3D" id="3.30.420.40">
    <property type="match status" value="1"/>
</dbReference>
<dbReference type="InterPro" id="IPR043129">
    <property type="entry name" value="ATPase_NBD"/>
</dbReference>
<dbReference type="InterPro" id="IPR018485">
    <property type="entry name" value="FGGY_C"/>
</dbReference>
<dbReference type="InterPro" id="IPR018484">
    <property type="entry name" value="FGGY_N"/>
</dbReference>
<dbReference type="InterPro" id="IPR006003">
    <property type="entry name" value="FGGY_RbtK-like"/>
</dbReference>
<dbReference type="NCBIfam" id="TIGR01315">
    <property type="entry name" value="5C_CHO_kinase"/>
    <property type="match status" value="1"/>
</dbReference>
<dbReference type="PANTHER" id="PTHR43435:SF4">
    <property type="entry name" value="FGGY CARBOHYDRATE KINASE DOMAIN-CONTAINING PROTEIN"/>
    <property type="match status" value="1"/>
</dbReference>
<dbReference type="PANTHER" id="PTHR43435">
    <property type="entry name" value="RIBULOKINASE"/>
    <property type="match status" value="1"/>
</dbReference>
<dbReference type="Pfam" id="PF02782">
    <property type="entry name" value="FGGY_C"/>
    <property type="match status" value="1"/>
</dbReference>
<dbReference type="Pfam" id="PF00370">
    <property type="entry name" value="FGGY_N"/>
    <property type="match status" value="1"/>
</dbReference>
<dbReference type="SUPFAM" id="SSF53067">
    <property type="entry name" value="Actin-like ATPase domain"/>
    <property type="match status" value="2"/>
</dbReference>
<sequence>MKSRKRQNNMQNETREPAVLSSQETSISRISPQDPEAKFYVGVDVGTGSARACVIDQSGNMLSLAEKPIKREQLISNFITQSSREIWNAVCYCVRTVVEESGVDPERVRGIGFDATCSLVVVSATNFEEIAVGPDFTNNDQNIILWMDHRAMKETEEINSSGDKCLKYVGGQMSVEMEIPKIKWLKNNLEAGIFQDCKFFDLPDYLTFKATGKENRSFCSAVCKQGFLPVGVEGSDIGWSKEFLNSIGLSELTKNDFERLGGSLREKKNFLTAGECISPLDKKAACQLGLTEHCVVSSGIIDAYAGWVGTVAAKPESAVKGLAETENYKKDFNGAIGRLAAVAGTSTCHILLSKNPIFVHGVWGPYRDVLARGFWAAEGGQSCTGVLLDHLITTHPAFTELSHMANLAGVSKFEYLNKILETLVEKRKVRSVISLAKHLFFYGDYHGNRSPIADPNMRACIIGQSMDNSIEDLAVMYLSACEFISQQTRQIIEVMLKSGHEINAIFMSGGQCRNSLLMRLLADCTGLPIVIPRYVDAAVVFGSALLGAAASEDFDYTREKRTLKGQKSSQTKTERFNDSYSSIQKLSMEDRNSTNGFVSPHNLQLSTPSAPAKINNYSLPICTQQPLDKTSEESSKDASLTVGQESLGEGRYNGTSFLWKVMQELTGNARIVNPNEKTHPDRILLDTKYQIFLDMIETQRKYRRMVDKVEGSFSR</sequence>
<gene>
    <name evidence="3 6" type="ordered locus">YDR109C</name>
</gene>
<proteinExistence type="evidence at protein level"/>
<organism>
    <name type="scientific">Saccharomyces cerevisiae (strain ATCC 204508 / S288c)</name>
    <name type="common">Baker's yeast</name>
    <dbReference type="NCBI Taxonomy" id="559292"/>
    <lineage>
        <taxon>Eukaryota</taxon>
        <taxon>Fungi</taxon>
        <taxon>Dikarya</taxon>
        <taxon>Ascomycota</taxon>
        <taxon>Saccharomycotina</taxon>
        <taxon>Saccharomycetes</taxon>
        <taxon>Saccharomycetales</taxon>
        <taxon>Saccharomycetaceae</taxon>
        <taxon>Saccharomyces</taxon>
    </lineage>
</organism>